<name>FLIZ_ECOLI</name>
<keyword id="KW-1185">Reference proteome</keyword>
<reference key="1">
    <citation type="journal article" date="1996" name="J. Bacteriol.">
        <title>Escherichia coli fliAZY operon.</title>
        <authorList>
            <person name="Mytelka D.S."/>
            <person name="Chamberlin M.J."/>
        </authorList>
    </citation>
    <scope>NUCLEOTIDE SEQUENCE [GENOMIC DNA]</scope>
    <source>
        <strain>K12 / RP437</strain>
    </source>
</reference>
<reference key="2">
    <citation type="journal article" date="1996" name="DNA Res.">
        <title>A 460-kb DNA sequence of the Escherichia coli K-12 genome corresponding to the 40.1-50.0 min region on the linkage map.</title>
        <authorList>
            <person name="Itoh T."/>
            <person name="Aiba H."/>
            <person name="Baba T."/>
            <person name="Fujita K."/>
            <person name="Hayashi K."/>
            <person name="Inada T."/>
            <person name="Isono K."/>
            <person name="Kasai H."/>
            <person name="Kimura S."/>
            <person name="Kitakawa M."/>
            <person name="Kitagawa M."/>
            <person name="Makino K."/>
            <person name="Miki T."/>
            <person name="Mizobuchi K."/>
            <person name="Mori H."/>
            <person name="Mori T."/>
            <person name="Motomura K."/>
            <person name="Nakade S."/>
            <person name="Nakamura Y."/>
            <person name="Nashimoto H."/>
            <person name="Nishio Y."/>
            <person name="Oshima T."/>
            <person name="Saito N."/>
            <person name="Sampei G."/>
            <person name="Seki Y."/>
            <person name="Sivasundaram S."/>
            <person name="Tagami H."/>
            <person name="Takeda J."/>
            <person name="Takemoto K."/>
            <person name="Wada C."/>
            <person name="Yamamoto Y."/>
            <person name="Horiuchi T."/>
        </authorList>
    </citation>
    <scope>NUCLEOTIDE SEQUENCE [LARGE SCALE GENOMIC DNA]</scope>
    <source>
        <strain>K12 / W3110 / ATCC 27325 / DSM 5911</strain>
    </source>
</reference>
<reference key="3">
    <citation type="journal article" date="1997" name="Science">
        <title>The complete genome sequence of Escherichia coli K-12.</title>
        <authorList>
            <person name="Blattner F.R."/>
            <person name="Plunkett G. III"/>
            <person name="Bloch C.A."/>
            <person name="Perna N.T."/>
            <person name="Burland V."/>
            <person name="Riley M."/>
            <person name="Collado-Vides J."/>
            <person name="Glasner J.D."/>
            <person name="Rode C.K."/>
            <person name="Mayhew G.F."/>
            <person name="Gregor J."/>
            <person name="Davis N.W."/>
            <person name="Kirkpatrick H.A."/>
            <person name="Goeden M.A."/>
            <person name="Rose D.J."/>
            <person name="Mau B."/>
            <person name="Shao Y."/>
        </authorList>
    </citation>
    <scope>NUCLEOTIDE SEQUENCE [LARGE SCALE GENOMIC DNA]</scope>
    <source>
        <strain>K12 / MG1655 / ATCC 47076</strain>
    </source>
</reference>
<reference key="4">
    <citation type="journal article" date="2006" name="Mol. Syst. Biol.">
        <title>Highly accurate genome sequences of Escherichia coli K-12 strains MG1655 and W3110.</title>
        <authorList>
            <person name="Hayashi K."/>
            <person name="Morooka N."/>
            <person name="Yamamoto Y."/>
            <person name="Fujita K."/>
            <person name="Isono K."/>
            <person name="Choi S."/>
            <person name="Ohtsubo E."/>
            <person name="Baba T."/>
            <person name="Wanner B.L."/>
            <person name="Mori H."/>
            <person name="Horiuchi T."/>
        </authorList>
    </citation>
    <scope>NUCLEOTIDE SEQUENCE [LARGE SCALE GENOMIC DNA]</scope>
    <source>
        <strain>K12 / W3110 / ATCC 27325 / DSM 5911</strain>
    </source>
</reference>
<reference key="5">
    <citation type="journal article" date="1995" name="Gene">
        <title>An alternative sigma factor controls transcription of flagellar class-III operons in Escherichia coli: gene sequence, overproduction, purification and characterization.</title>
        <authorList>
            <person name="Liu X."/>
            <person name="Matsumura P."/>
        </authorList>
    </citation>
    <scope>NUCLEOTIDE SEQUENCE [GENOMIC DNA] OF 1-11</scope>
    <source>
        <strain>K12</strain>
    </source>
</reference>
<reference key="6">
    <citation type="journal article" date="2008" name="Genes Dev.">
        <title>Inverse regulatory coordination of motility and curli-mediated adhesion in Escherichia coli.</title>
        <authorList>
            <person name="Pesavento C."/>
            <person name="Becker G."/>
            <person name="Sommerfeldt N."/>
            <person name="Possling A."/>
            <person name="Tschowri N."/>
            <person name="Mehlis A."/>
            <person name="Hengge R."/>
        </authorList>
    </citation>
    <scope>FUNCTION</scope>
    <scope>INDUCTION</scope>
    <scope>DISRUPTION PHENOTYPE</scope>
    <source>
        <strain>K12 / MC4100 / ATCC 35695 / DSM 6574</strain>
        <strain>K12 / W3110 / ATCC 27325 / DSM 5911</strain>
    </source>
</reference>
<dbReference type="EMBL" id="U18539">
    <property type="protein sequence ID" value="AAC43544.1"/>
    <property type="status" value="ALT_INIT"/>
    <property type="molecule type" value="Genomic_DNA"/>
</dbReference>
<dbReference type="EMBL" id="U00096">
    <property type="protein sequence ID" value="AAC74988.2"/>
    <property type="molecule type" value="Genomic_DNA"/>
</dbReference>
<dbReference type="EMBL" id="AP009048">
    <property type="protein sequence ID" value="BAA15741.1"/>
    <property type="molecule type" value="Genomic_DNA"/>
</dbReference>
<dbReference type="EMBL" id="L36677">
    <property type="status" value="NOT_ANNOTATED_CDS"/>
    <property type="molecule type" value="Genomic_DNA"/>
</dbReference>
<dbReference type="PIR" id="F64955">
    <property type="entry name" value="F64955"/>
</dbReference>
<dbReference type="RefSeq" id="NP_416431.2">
    <property type="nucleotide sequence ID" value="NC_000913.3"/>
</dbReference>
<dbReference type="RefSeq" id="WP_001350518.1">
    <property type="nucleotide sequence ID" value="NZ_LN832404.1"/>
</dbReference>
<dbReference type="BioGRID" id="4263070">
    <property type="interactions" value="108"/>
</dbReference>
<dbReference type="BioGRID" id="851174">
    <property type="interactions" value="1"/>
</dbReference>
<dbReference type="FunCoup" id="P52627">
    <property type="interactions" value="35"/>
</dbReference>
<dbReference type="IntAct" id="P52627">
    <property type="interactions" value="7"/>
</dbReference>
<dbReference type="STRING" id="511145.b1921"/>
<dbReference type="PaxDb" id="511145-b1921"/>
<dbReference type="EnsemblBacteria" id="AAC74988">
    <property type="protein sequence ID" value="AAC74988"/>
    <property type="gene ID" value="b1921"/>
</dbReference>
<dbReference type="GeneID" id="946833"/>
<dbReference type="KEGG" id="ecj:JW1906"/>
<dbReference type="KEGG" id="eco:b1921"/>
<dbReference type="KEGG" id="ecoc:C3026_10900"/>
<dbReference type="PATRIC" id="fig|1411691.4.peg.328"/>
<dbReference type="EchoBASE" id="EB1331"/>
<dbReference type="eggNOG" id="ENOG502Z9YQ">
    <property type="taxonomic scope" value="Bacteria"/>
</dbReference>
<dbReference type="HOGENOM" id="CLU_132109_0_0_6"/>
<dbReference type="InParanoid" id="P52627"/>
<dbReference type="OMA" id="GDLHCKE"/>
<dbReference type="OrthoDB" id="6503944at2"/>
<dbReference type="PhylomeDB" id="P52627"/>
<dbReference type="BioCyc" id="EcoCyc:EG11356-MONOMER"/>
<dbReference type="PRO" id="PR:P52627"/>
<dbReference type="Proteomes" id="UP000000625">
    <property type="component" value="Chromosome"/>
</dbReference>
<dbReference type="GO" id="GO:0001046">
    <property type="term" value="F:core promoter sequence-specific DNA binding"/>
    <property type="evidence" value="ECO:0000314"/>
    <property type="project" value="EcoCyc"/>
</dbReference>
<dbReference type="GO" id="GO:0016989">
    <property type="term" value="F:sigma factor antagonist activity"/>
    <property type="evidence" value="ECO:0000315"/>
    <property type="project" value="EcoCyc"/>
</dbReference>
<dbReference type="GO" id="GO:0015074">
    <property type="term" value="P:DNA integration"/>
    <property type="evidence" value="ECO:0007669"/>
    <property type="project" value="InterPro"/>
</dbReference>
<dbReference type="GO" id="GO:1902021">
    <property type="term" value="P:regulation of bacterial-type flagellum-dependent cell motility"/>
    <property type="evidence" value="ECO:0000315"/>
    <property type="project" value="EcoCyc"/>
</dbReference>
<dbReference type="InterPro" id="IPR022523">
    <property type="entry name" value="Flagellar_regulator_FliZ"/>
</dbReference>
<dbReference type="InterPro" id="IPR004107">
    <property type="entry name" value="Integrase_SAM-like_N"/>
</dbReference>
<dbReference type="NCBIfam" id="TIGR03823">
    <property type="entry name" value="FliZ"/>
    <property type="match status" value="1"/>
</dbReference>
<dbReference type="Pfam" id="PF02899">
    <property type="entry name" value="Phage_int_SAM_1"/>
    <property type="match status" value="1"/>
</dbReference>
<comment type="function">
    <text evidence="1">During the post-exponential growth phase transiently interferes with RpoS (sigma S) activity without affecting expression of RpoS itself. It is probably not an anti-sigma factor as its overexpression is detrimental in rapidly growing cells where there is almost no sigma S factor. There is a strong overlap between Crl-activated genes and FliZ-down-regulated genes. FliZ acts as a timing device for expression of the genes for the adhesive curli fimbriae by indirectly decreasing expression of the curli regulator CsgD.</text>
</comment>
<comment type="induction">
    <text evidence="1">Induced in early post-exponential phase, its expression decreases again at OD578 2-2.5.</text>
</comment>
<comment type="disruption phenotype">
    <text evidence="1">Not required for motility, disruption leads to derepression of the adhesive curli fimbriae genes.</text>
</comment>
<comment type="sequence caution" evidence="2">
    <conflict type="erroneous initiation">
        <sequence resource="EMBL-CDS" id="AAC43544"/>
    </conflict>
    <text>Extended N-terminus.</text>
</comment>
<proteinExistence type="evidence at transcript level"/>
<sequence length="183" mass="21658">MMVQHLKRRPLSRYLKDFKHSQTHCAHCRKLLDRITLVRDGKIVNKIEISRLDTLLDENGWQTEQKSWAALCRFCGDLHCKTQSDFFDIIGFKQFLFEQTEMSPGTVREYVVRLRRLGNHLHEQNISLDQLQDGFLDEILAPWLPTTSTNNYRIALRKYQHYQRQTCTRLVQKSSSLPSSDIY</sequence>
<feature type="chain" id="PRO_0000087288" description="Regulator of sigma S factor FliZ">
    <location>
        <begin position="1"/>
        <end position="183"/>
    </location>
</feature>
<gene>
    <name type="primary">fliZ</name>
    <name type="synonym">yedH</name>
    <name type="ordered locus">b1921</name>
    <name type="ordered locus">JW1906</name>
</gene>
<evidence type="ECO:0000269" key="1">
    <source>
    </source>
</evidence>
<evidence type="ECO:0000305" key="2"/>
<organism>
    <name type="scientific">Escherichia coli (strain K12)</name>
    <dbReference type="NCBI Taxonomy" id="83333"/>
    <lineage>
        <taxon>Bacteria</taxon>
        <taxon>Pseudomonadati</taxon>
        <taxon>Pseudomonadota</taxon>
        <taxon>Gammaproteobacteria</taxon>
        <taxon>Enterobacterales</taxon>
        <taxon>Enterobacteriaceae</taxon>
        <taxon>Escherichia</taxon>
    </lineage>
</organism>
<accession>P52627</accession>
<accession>P76317</accession>
<protein>
    <recommendedName>
        <fullName>Regulator of sigma S factor FliZ</fullName>
    </recommendedName>
</protein>